<dbReference type="EC" id="1.3.3.11" evidence="1"/>
<dbReference type="EMBL" id="CP000629">
    <property type="protein sequence ID" value="ACM29922.1"/>
    <property type="molecule type" value="Genomic_DNA"/>
</dbReference>
<dbReference type="RefSeq" id="WP_012650172.1">
    <property type="nucleotide sequence ID" value="NC_011983.1"/>
</dbReference>
<dbReference type="SMR" id="B9JJ30"/>
<dbReference type="STRING" id="311403.Arad_8717"/>
<dbReference type="KEGG" id="ara:Arad_8717"/>
<dbReference type="eggNOG" id="COG5424">
    <property type="taxonomic scope" value="Bacteria"/>
</dbReference>
<dbReference type="HOGENOM" id="CLU_080136_0_0_5"/>
<dbReference type="UniPathway" id="UPA00539"/>
<dbReference type="Proteomes" id="UP000001600">
    <property type="component" value="Chromosome 2"/>
</dbReference>
<dbReference type="GO" id="GO:0033732">
    <property type="term" value="F:pyrroloquinoline-quinone synthase activity"/>
    <property type="evidence" value="ECO:0007669"/>
    <property type="project" value="UniProtKB-EC"/>
</dbReference>
<dbReference type="GO" id="GO:0018189">
    <property type="term" value="P:pyrroloquinoline quinone biosynthetic process"/>
    <property type="evidence" value="ECO:0007669"/>
    <property type="project" value="UniProtKB-UniRule"/>
</dbReference>
<dbReference type="GO" id="GO:0006790">
    <property type="term" value="P:sulfur compound metabolic process"/>
    <property type="evidence" value="ECO:0007669"/>
    <property type="project" value="UniProtKB-ARBA"/>
</dbReference>
<dbReference type="Gene3D" id="1.20.910.10">
    <property type="entry name" value="Heme oxygenase-like"/>
    <property type="match status" value="1"/>
</dbReference>
<dbReference type="HAMAP" id="MF_00654">
    <property type="entry name" value="PQQ_syn_PqqC"/>
    <property type="match status" value="1"/>
</dbReference>
<dbReference type="InterPro" id="IPR016084">
    <property type="entry name" value="Haem_Oase-like_multi-hlx"/>
</dbReference>
<dbReference type="InterPro" id="IPR011845">
    <property type="entry name" value="PqqC"/>
</dbReference>
<dbReference type="InterPro" id="IPR039068">
    <property type="entry name" value="PqqC-like"/>
</dbReference>
<dbReference type="InterPro" id="IPR004305">
    <property type="entry name" value="Thiaminase-2/PQQC"/>
</dbReference>
<dbReference type="NCBIfam" id="TIGR02111">
    <property type="entry name" value="PQQ_syn_pqqC"/>
    <property type="match status" value="1"/>
</dbReference>
<dbReference type="PANTHER" id="PTHR40279:SF3">
    <property type="entry name" value="4-AMINOBENZOATE SYNTHASE"/>
    <property type="match status" value="1"/>
</dbReference>
<dbReference type="PANTHER" id="PTHR40279">
    <property type="entry name" value="PQQC-LIKE PROTEIN"/>
    <property type="match status" value="1"/>
</dbReference>
<dbReference type="Pfam" id="PF03070">
    <property type="entry name" value="TENA_THI-4"/>
    <property type="match status" value="1"/>
</dbReference>
<dbReference type="SUPFAM" id="SSF48613">
    <property type="entry name" value="Heme oxygenase-like"/>
    <property type="match status" value="1"/>
</dbReference>
<gene>
    <name evidence="1" type="primary">pqqC</name>
    <name type="ordered locus">Arad_8717</name>
</gene>
<comment type="function">
    <text evidence="1">Ring cyclization and eight-electron oxidation of 3a-(2-amino-2-carboxyethyl)-4,5-dioxo-4,5,6,7,8,9-hexahydroquinoline-7,9-dicarboxylic-acid to PQQ.</text>
</comment>
<comment type="catalytic activity">
    <reaction evidence="1">
        <text>6-(2-amino-2-carboxyethyl)-7,8-dioxo-1,2,3,4,7,8-hexahydroquinoline-2,4-dicarboxylate + 3 O2 = pyrroloquinoline quinone + 2 H2O2 + 2 H2O + H(+)</text>
        <dbReference type="Rhea" id="RHEA:10692"/>
        <dbReference type="ChEBI" id="CHEBI:15377"/>
        <dbReference type="ChEBI" id="CHEBI:15378"/>
        <dbReference type="ChEBI" id="CHEBI:15379"/>
        <dbReference type="ChEBI" id="CHEBI:16240"/>
        <dbReference type="ChEBI" id="CHEBI:58442"/>
        <dbReference type="ChEBI" id="CHEBI:58778"/>
        <dbReference type="EC" id="1.3.3.11"/>
    </reaction>
</comment>
<comment type="pathway">
    <text evidence="1">Cofactor biosynthesis; pyrroloquinoline quinone biosynthesis.</text>
</comment>
<comment type="similarity">
    <text evidence="1">Belongs to the PqqC family.</text>
</comment>
<organism>
    <name type="scientific">Rhizobium rhizogenes (strain K84 / ATCC BAA-868)</name>
    <name type="common">Agrobacterium radiobacter</name>
    <dbReference type="NCBI Taxonomy" id="311403"/>
    <lineage>
        <taxon>Bacteria</taxon>
        <taxon>Pseudomonadati</taxon>
        <taxon>Pseudomonadota</taxon>
        <taxon>Alphaproteobacteria</taxon>
        <taxon>Hyphomicrobiales</taxon>
        <taxon>Rhizobiaceae</taxon>
        <taxon>Rhizobium/Agrobacterium group</taxon>
        <taxon>Rhizobium</taxon>
    </lineage>
</organism>
<accession>B9JJ30</accession>
<feature type="chain" id="PRO_1000147521" description="Pyrroloquinoline-quinone synthase">
    <location>
        <begin position="1"/>
        <end position="247"/>
    </location>
</feature>
<name>PQQC_RHIR8</name>
<keyword id="KW-0560">Oxidoreductase</keyword>
<keyword id="KW-0884">PQQ biosynthesis</keyword>
<protein>
    <recommendedName>
        <fullName evidence="1">Pyrroloquinoline-quinone synthase</fullName>
        <ecNumber evidence="1">1.3.3.11</ecNumber>
    </recommendedName>
    <alternativeName>
        <fullName evidence="1">Coenzyme PQQ synthesis protein C</fullName>
    </alternativeName>
    <alternativeName>
        <fullName evidence="1">Pyrroloquinoline quinone biosynthesis protein C</fullName>
    </alternativeName>
</protein>
<proteinExistence type="inferred from homology"/>
<evidence type="ECO:0000255" key="1">
    <source>
        <dbReference type="HAMAP-Rule" id="MF_00654"/>
    </source>
</evidence>
<reference key="1">
    <citation type="journal article" date="2009" name="J. Bacteriol.">
        <title>Genome sequences of three Agrobacterium biovars help elucidate the evolution of multichromosome genomes in bacteria.</title>
        <authorList>
            <person name="Slater S.C."/>
            <person name="Goldman B.S."/>
            <person name="Goodner B."/>
            <person name="Setubal J.C."/>
            <person name="Farrand S.K."/>
            <person name="Nester E.W."/>
            <person name="Burr T.J."/>
            <person name="Banta L."/>
            <person name="Dickerman A.W."/>
            <person name="Paulsen I."/>
            <person name="Otten L."/>
            <person name="Suen G."/>
            <person name="Welch R."/>
            <person name="Almeida N.F."/>
            <person name="Arnold F."/>
            <person name="Burton O.T."/>
            <person name="Du Z."/>
            <person name="Ewing A."/>
            <person name="Godsy E."/>
            <person name="Heisel S."/>
            <person name="Houmiel K.L."/>
            <person name="Jhaveri J."/>
            <person name="Lu J."/>
            <person name="Miller N.M."/>
            <person name="Norton S."/>
            <person name="Chen Q."/>
            <person name="Phoolcharoen W."/>
            <person name="Ohlin V."/>
            <person name="Ondrusek D."/>
            <person name="Pride N."/>
            <person name="Stricklin S.L."/>
            <person name="Sun J."/>
            <person name="Wheeler C."/>
            <person name="Wilson L."/>
            <person name="Zhu H."/>
            <person name="Wood D.W."/>
        </authorList>
    </citation>
    <scope>NUCLEOTIDE SEQUENCE [LARGE SCALE GENOMIC DNA]</scope>
    <source>
        <strain>K84 / ATCC BAA-868</strain>
    </source>
</reference>
<sequence>MQQAANREAFEARLRAVGEARYHDKHPFHQQLHGGQCSMIQVRAWVINRYYYQSRIPMKDAAFLSRCEDPQLRRAWRNRIEDHDGGVDEGGGIRRWLKLAEAVGLDPDYVASTRGVLAGTRFAVEAYVHFVREKPMLEAVASSLTEMFAPAIHANRIAGLIEHYAFANDSALAYFRQRLNEAPKEVAFGLNYVLDHADTLEKQDASVAALTFKTDVLWSQLDALSHAYVSPGLIPPGGWDGREGVIS</sequence>